<reference key="1">
    <citation type="journal article" date="1999" name="Proc. Natl. Acad. Sci. U.S.A.">
        <title>ARG1 (Altered Response to Gravity) encodes a novel DnaJ-like protein which potentially interacts with the cytoskeleton.</title>
        <authorList>
            <person name="Sedbrook J.C."/>
            <person name="Chen R."/>
            <person name="Masson P.H."/>
        </authorList>
    </citation>
    <scope>NUCLEOTIDE SEQUENCE [MRNA]</scope>
    <scope>FUNCTION</scope>
    <scope>TISSUE SPECIFICITY</scope>
    <scope>DISRUPTION PHENOTYPE</scope>
</reference>
<reference key="2">
    <citation type="journal article" date="2000" name="Nature">
        <title>Sequence and analysis of chromosome 1 of the plant Arabidopsis thaliana.</title>
        <authorList>
            <person name="Theologis A."/>
            <person name="Ecker J.R."/>
            <person name="Palm C.J."/>
            <person name="Federspiel N.A."/>
            <person name="Kaul S."/>
            <person name="White O."/>
            <person name="Alonso J."/>
            <person name="Altafi H."/>
            <person name="Araujo R."/>
            <person name="Bowman C.L."/>
            <person name="Brooks S.Y."/>
            <person name="Buehler E."/>
            <person name="Chan A."/>
            <person name="Chao Q."/>
            <person name="Chen H."/>
            <person name="Cheuk R.F."/>
            <person name="Chin C.W."/>
            <person name="Chung M.K."/>
            <person name="Conn L."/>
            <person name="Conway A.B."/>
            <person name="Conway A.R."/>
            <person name="Creasy T.H."/>
            <person name="Dewar K."/>
            <person name="Dunn P."/>
            <person name="Etgu P."/>
            <person name="Feldblyum T.V."/>
            <person name="Feng J.-D."/>
            <person name="Fong B."/>
            <person name="Fujii C.Y."/>
            <person name="Gill J.E."/>
            <person name="Goldsmith A.D."/>
            <person name="Haas B."/>
            <person name="Hansen N.F."/>
            <person name="Hughes B."/>
            <person name="Huizar L."/>
            <person name="Hunter J.L."/>
            <person name="Jenkins J."/>
            <person name="Johnson-Hopson C."/>
            <person name="Khan S."/>
            <person name="Khaykin E."/>
            <person name="Kim C.J."/>
            <person name="Koo H.L."/>
            <person name="Kremenetskaia I."/>
            <person name="Kurtz D.B."/>
            <person name="Kwan A."/>
            <person name="Lam B."/>
            <person name="Langin-Hooper S."/>
            <person name="Lee A."/>
            <person name="Lee J.M."/>
            <person name="Lenz C.A."/>
            <person name="Li J.H."/>
            <person name="Li Y.-P."/>
            <person name="Lin X."/>
            <person name="Liu S.X."/>
            <person name="Liu Z.A."/>
            <person name="Luros J.S."/>
            <person name="Maiti R."/>
            <person name="Marziali A."/>
            <person name="Militscher J."/>
            <person name="Miranda M."/>
            <person name="Nguyen M."/>
            <person name="Nierman W.C."/>
            <person name="Osborne B.I."/>
            <person name="Pai G."/>
            <person name="Peterson J."/>
            <person name="Pham P.K."/>
            <person name="Rizzo M."/>
            <person name="Rooney T."/>
            <person name="Rowley D."/>
            <person name="Sakano H."/>
            <person name="Salzberg S.L."/>
            <person name="Schwartz J.R."/>
            <person name="Shinn P."/>
            <person name="Southwick A.M."/>
            <person name="Sun H."/>
            <person name="Tallon L.J."/>
            <person name="Tambunga G."/>
            <person name="Toriumi M.J."/>
            <person name="Town C.D."/>
            <person name="Utterback T."/>
            <person name="Van Aken S."/>
            <person name="Vaysberg M."/>
            <person name="Vysotskaia V.S."/>
            <person name="Walker M."/>
            <person name="Wu D."/>
            <person name="Yu G."/>
            <person name="Fraser C.M."/>
            <person name="Venter J.C."/>
            <person name="Davis R.W."/>
        </authorList>
    </citation>
    <scope>NUCLEOTIDE SEQUENCE [LARGE SCALE GENOMIC DNA]</scope>
    <source>
        <strain>cv. Columbia</strain>
    </source>
</reference>
<reference key="3">
    <citation type="journal article" date="2017" name="Plant J.">
        <title>Araport11: a complete reannotation of the Arabidopsis thaliana reference genome.</title>
        <authorList>
            <person name="Cheng C.Y."/>
            <person name="Krishnakumar V."/>
            <person name="Chan A.P."/>
            <person name="Thibaud-Nissen F."/>
            <person name="Schobel S."/>
            <person name="Town C.D."/>
        </authorList>
    </citation>
    <scope>GENOME REANNOTATION</scope>
    <source>
        <strain>cv. Columbia</strain>
    </source>
</reference>
<reference key="4">
    <citation type="journal article" date="2001" name="Cell Stress Chaperones">
        <title>The J-domain proteins of Arabidopsis thaliana: an unexpectedly large and diverse family of chaperones.</title>
        <authorList>
            <person name="Miernyk J.A."/>
        </authorList>
    </citation>
    <scope>GENE FAMILY</scope>
    <scope>NOMENCLATURE</scope>
</reference>
<reference key="5">
    <citation type="journal article" date="2003" name="Plant Cell">
        <title>ALTERED RESPONSE TO GRAVITY is a peripheral membrane protein that modulates gravity-induced cytoplasmic alkalinization and lateral auxin transport in plant statocytes.</title>
        <authorList>
            <person name="Boonsirichai K."/>
            <person name="Sedbrook J.C."/>
            <person name="Chen R."/>
            <person name="Gilroy S."/>
            <person name="Masson P.H."/>
        </authorList>
    </citation>
    <scope>FUNCTION</scope>
    <scope>SUBCELLULAR LOCATION</scope>
    <scope>TISSUE SPECIFICITY</scope>
    <scope>DISRUPTION PHENOTYPE</scope>
</reference>
<reference key="6">
    <citation type="journal article" date="2009" name="Plant Physiol.">
        <title>Large-scale Arabidopsis phosphoproteome profiling reveals novel chloroplast kinase substrates and phosphorylation networks.</title>
        <authorList>
            <person name="Reiland S."/>
            <person name="Messerli G."/>
            <person name="Baerenfaller K."/>
            <person name="Gerrits B."/>
            <person name="Endler A."/>
            <person name="Grossmann J."/>
            <person name="Gruissem W."/>
            <person name="Baginsky S."/>
        </authorList>
    </citation>
    <scope>IDENTIFICATION BY MASS SPECTROMETRY [LARGE SCALE ANALYSIS]</scope>
</reference>
<proteinExistence type="evidence at protein level"/>
<organism>
    <name type="scientific">Arabidopsis thaliana</name>
    <name type="common">Mouse-ear cress</name>
    <dbReference type="NCBI Taxonomy" id="3702"/>
    <lineage>
        <taxon>Eukaryota</taxon>
        <taxon>Viridiplantae</taxon>
        <taxon>Streptophyta</taxon>
        <taxon>Embryophyta</taxon>
        <taxon>Tracheophyta</taxon>
        <taxon>Spermatophyta</taxon>
        <taxon>Magnoliopsida</taxon>
        <taxon>eudicotyledons</taxon>
        <taxon>Gunneridae</taxon>
        <taxon>Pentapetalae</taxon>
        <taxon>rosids</taxon>
        <taxon>malvids</taxon>
        <taxon>Brassicales</taxon>
        <taxon>Brassicaceae</taxon>
        <taxon>Camelineae</taxon>
        <taxon>Arabidopsis</taxon>
    </lineage>
</organism>
<sequence>MSAKKLEGSSAPANRRDPYEVLCVSKDANDQEIKSAYRKLALKYHPDKNANNPDASELFKEVAFSYSILSDPEKRRHYDNAGFEALDADGMDMEIDLSNLGTVNTMFAALFSKLGVPIKTTVSANVLEEAMNGTVTVRPLPIGTSVSGKVEKQCAHFFGVTISEQQAESGVVVRVTSTAQSKFKLLYFEQDSSGGYGLALQEEREKTGKVTSAGMYFLHFQVYRMDTTVNALAAAKDPESAFFKRLEGLQPCEVSELKAGTHIFAVYGDNFFKTASYTIEALCAKTYEDTTEKLKEIEAQILRKRNELRQFETEYRKALARFQEVTNRYTQEKQTVDELLKQRDTIHSTFSVVKTPSGNNLSNGSSSKAQGDESKGDGDSAGEEGGTENRDKSKRKWFNLNLKGSDKKLG</sequence>
<dbReference type="EMBL" id="AF089810">
    <property type="protein sequence ID" value="AAD13758.1"/>
    <property type="molecule type" value="mRNA"/>
</dbReference>
<dbReference type="EMBL" id="AC015986">
    <property type="protein sequence ID" value="AAF26045.1"/>
    <property type="molecule type" value="Genomic_DNA"/>
</dbReference>
<dbReference type="EMBL" id="CP002684">
    <property type="protein sequence ID" value="AEE34786.1"/>
    <property type="molecule type" value="Genomic_DNA"/>
</dbReference>
<dbReference type="PIR" id="E96707">
    <property type="entry name" value="E96707"/>
</dbReference>
<dbReference type="RefSeq" id="NP_177004.1">
    <property type="nucleotide sequence ID" value="NM_105508.4"/>
</dbReference>
<dbReference type="SMR" id="Q9ZSY2"/>
<dbReference type="FunCoup" id="Q9ZSY2">
    <property type="interactions" value="1790"/>
</dbReference>
<dbReference type="STRING" id="3702.Q9ZSY2"/>
<dbReference type="iPTMnet" id="Q9ZSY2"/>
<dbReference type="PaxDb" id="3702-AT1G68370.1"/>
<dbReference type="ProteomicsDB" id="222080"/>
<dbReference type="EnsemblPlants" id="AT1G68370.1">
    <property type="protein sequence ID" value="AT1G68370.1"/>
    <property type="gene ID" value="AT1G68370"/>
</dbReference>
<dbReference type="GeneID" id="843166"/>
<dbReference type="Gramene" id="AT1G68370.1">
    <property type="protein sequence ID" value="AT1G68370.1"/>
    <property type="gene ID" value="AT1G68370"/>
</dbReference>
<dbReference type="KEGG" id="ath:AT1G68370"/>
<dbReference type="Araport" id="AT1G68370"/>
<dbReference type="TAIR" id="AT1G68370">
    <property type="gene designation" value="ARG1"/>
</dbReference>
<dbReference type="eggNOG" id="KOG0713">
    <property type="taxonomic scope" value="Eukaryota"/>
</dbReference>
<dbReference type="HOGENOM" id="CLU_031086_0_0_1"/>
<dbReference type="InParanoid" id="Q9ZSY2"/>
<dbReference type="OMA" id="VAIICKS"/>
<dbReference type="PhylomeDB" id="Q9ZSY2"/>
<dbReference type="PRO" id="PR:Q9ZSY2"/>
<dbReference type="Proteomes" id="UP000006548">
    <property type="component" value="Chromosome 1"/>
</dbReference>
<dbReference type="ExpressionAtlas" id="Q9ZSY2">
    <property type="expression patterns" value="baseline and differential"/>
</dbReference>
<dbReference type="GO" id="GO:0005856">
    <property type="term" value="C:cytoskeleton"/>
    <property type="evidence" value="ECO:0007669"/>
    <property type="project" value="UniProtKB-SubCell"/>
</dbReference>
<dbReference type="GO" id="GO:0005789">
    <property type="term" value="C:endoplasmic reticulum membrane"/>
    <property type="evidence" value="ECO:0007669"/>
    <property type="project" value="UniProtKB-SubCell"/>
</dbReference>
<dbReference type="GO" id="GO:0000139">
    <property type="term" value="C:Golgi membrane"/>
    <property type="evidence" value="ECO:0007669"/>
    <property type="project" value="UniProtKB-SubCell"/>
</dbReference>
<dbReference type="GO" id="GO:0008092">
    <property type="term" value="F:cytoskeletal protein binding"/>
    <property type="evidence" value="ECO:0000304"/>
    <property type="project" value="TAIR"/>
</dbReference>
<dbReference type="GO" id="GO:0009958">
    <property type="term" value="P:positive gravitropism"/>
    <property type="evidence" value="ECO:0000315"/>
    <property type="project" value="TAIR"/>
</dbReference>
<dbReference type="CDD" id="cd06257">
    <property type="entry name" value="DnaJ"/>
    <property type="match status" value="1"/>
</dbReference>
<dbReference type="FunFam" id="1.10.287.110:FF:000097">
    <property type="entry name" value="Chaperone protein dnaJ 16"/>
    <property type="match status" value="1"/>
</dbReference>
<dbReference type="Gene3D" id="1.10.287.110">
    <property type="entry name" value="DnaJ domain"/>
    <property type="match status" value="1"/>
</dbReference>
<dbReference type="InterPro" id="IPR001623">
    <property type="entry name" value="DnaJ_domain"/>
</dbReference>
<dbReference type="InterPro" id="IPR018253">
    <property type="entry name" value="DnaJ_domain_CS"/>
</dbReference>
<dbReference type="InterPro" id="IPR036869">
    <property type="entry name" value="J_dom_sf"/>
</dbReference>
<dbReference type="InterPro" id="IPR052812">
    <property type="entry name" value="Plant_DnaJ_domain"/>
</dbReference>
<dbReference type="PANTHER" id="PTHR44272">
    <property type="entry name" value="DNAJ DOMAIN (PROKARYOTIC HEAT SHOCK PROTEIN)"/>
    <property type="match status" value="1"/>
</dbReference>
<dbReference type="PANTHER" id="PTHR44272:SF3">
    <property type="entry name" value="J DOMAIN-CONTAINING PROTEIN"/>
    <property type="match status" value="1"/>
</dbReference>
<dbReference type="Pfam" id="PF00226">
    <property type="entry name" value="DnaJ"/>
    <property type="match status" value="1"/>
</dbReference>
<dbReference type="PRINTS" id="PR00625">
    <property type="entry name" value="JDOMAIN"/>
</dbReference>
<dbReference type="SMART" id="SM00271">
    <property type="entry name" value="DnaJ"/>
    <property type="match status" value="1"/>
</dbReference>
<dbReference type="SUPFAM" id="SSF46565">
    <property type="entry name" value="Chaperone J-domain"/>
    <property type="match status" value="1"/>
</dbReference>
<dbReference type="PROSITE" id="PS00636">
    <property type="entry name" value="DNAJ_1"/>
    <property type="match status" value="1"/>
</dbReference>
<dbReference type="PROSITE" id="PS50076">
    <property type="entry name" value="DNAJ_2"/>
    <property type="match status" value="1"/>
</dbReference>
<accession>Q9ZSY2</accession>
<feature type="chain" id="PRO_0000071083" description="Chaperone protein dnaJ 15">
    <location>
        <begin position="1"/>
        <end position="410"/>
    </location>
</feature>
<feature type="domain" description="J" evidence="3">
    <location>
        <begin position="17"/>
        <end position="82"/>
    </location>
</feature>
<feature type="region of interest" description="Disordered" evidence="4">
    <location>
        <begin position="351"/>
        <end position="410"/>
    </location>
</feature>
<feature type="coiled-coil region" evidence="2">
    <location>
        <begin position="284"/>
        <end position="344"/>
    </location>
</feature>
<feature type="compositionally biased region" description="Low complexity" evidence="4">
    <location>
        <begin position="357"/>
        <end position="367"/>
    </location>
</feature>
<gene>
    <name type="primary">ATJ15</name>
    <name type="synonym">ARG1</name>
    <name type="synonym">B15</name>
    <name type="ordered locus">At1g68370</name>
    <name type="ORF">T2E12.8</name>
</gene>
<name>DNJ15_ARATH</name>
<comment type="function">
    <text evidence="1 5 6">Plays a continuous role in plant development probably in the structural organization of compartments (By similarity). Seems to be involved in early gravitropic signal transduction within the gravity-perceiving cells (statocytes), where it influences pH changes and auxin distribution. Probably affects the localization and/or activity of auxin efflux carrier components (PIN proteins) or other proteins involved in lateral auxin transport.</text>
</comment>
<comment type="subcellular location">
    <subcellularLocation>
        <location evidence="5">Cytoplasm</location>
        <location evidence="5">Cytoskeleton</location>
    </subcellularLocation>
    <subcellularLocation>
        <location evidence="5">Endoplasmic reticulum membrane</location>
        <topology evidence="5">Peripheral membrane protein</topology>
    </subcellularLocation>
    <subcellularLocation>
        <location evidence="5">Golgi apparatus membrane</location>
        <topology evidence="5">Peripheral membrane protein</topology>
    </subcellularLocation>
    <text>Found in endoplasmic reticulum, Golgi, vesicles near the plasma membrane and around cell plate, and bound to the plasma membrane. Probably interacts with integral membrane proteins. Also interacts with cytoskeleton.</text>
</comment>
<comment type="tissue specificity">
    <text evidence="5 6">Expressed at high levels in root cap, root tip meristematic region and elongation zones, and at lower levels in mature part of roots (at protein level). Constitutively expressed in seedlings, etiolated or not, roots, rosette leaves, cauline leaves, stems, flowers, siliques and pollen.</text>
</comment>
<comment type="disruption phenotype">
    <text evidence="5 6">Roots and hypocotyls reorient slowly upon gravistimulation. Plants are normal for phototropism and for responses to hormones such as auxin, abscisic acid, gibberellins and ethylene. They also accumulate starch like the wild-type. In response to gravistimulation arg1-2 lacks cytoplasmic pH changes in columella cells and has a bad repartition of auxin that accumulates in root tips instead of forming a gradient.</text>
</comment>
<comment type="similarity">
    <text evidence="7">Belongs to the DnaJ family. B/II subfamily.</text>
</comment>
<protein>
    <recommendedName>
        <fullName>Chaperone protein dnaJ 15</fullName>
        <shortName>AtDjB15</shortName>
        <shortName>AtJ15</shortName>
    </recommendedName>
    <alternativeName>
        <fullName>Protein ALTERED RESPONSE TO GRAVITY</fullName>
        <shortName>AtARG1</shortName>
    </alternativeName>
</protein>
<evidence type="ECO:0000250" key="1"/>
<evidence type="ECO:0000255" key="2"/>
<evidence type="ECO:0000255" key="3">
    <source>
        <dbReference type="PROSITE-ProRule" id="PRU00286"/>
    </source>
</evidence>
<evidence type="ECO:0000256" key="4">
    <source>
        <dbReference type="SAM" id="MobiDB-lite"/>
    </source>
</evidence>
<evidence type="ECO:0000269" key="5">
    <source>
    </source>
</evidence>
<evidence type="ECO:0000269" key="6">
    <source>
    </source>
</evidence>
<evidence type="ECO:0000305" key="7"/>
<keyword id="KW-0143">Chaperone</keyword>
<keyword id="KW-0175">Coiled coil</keyword>
<keyword id="KW-0963">Cytoplasm</keyword>
<keyword id="KW-0206">Cytoskeleton</keyword>
<keyword id="KW-0256">Endoplasmic reticulum</keyword>
<keyword id="KW-0333">Golgi apparatus</keyword>
<keyword id="KW-0472">Membrane</keyword>
<keyword id="KW-1185">Reference proteome</keyword>